<protein>
    <recommendedName>
        <fullName evidence="2">U-scoloptoxin(15)-Er1a</fullName>
        <shortName evidence="2">U-SLPTX(15)-Er1a</shortName>
    </recommendedName>
</protein>
<proteinExistence type="inferred from homology"/>
<dbReference type="SMR" id="P0DQH1"/>
<dbReference type="TCDB" id="8.B.44.1.2">
    <property type="family name" value="the centipede spooky toxin (scoloptoxin-15) family"/>
</dbReference>
<dbReference type="GO" id="GO:0005576">
    <property type="term" value="C:extracellular region"/>
    <property type="evidence" value="ECO:0007669"/>
    <property type="project" value="UniProtKB-SubCell"/>
</dbReference>
<dbReference type="GO" id="GO:0090729">
    <property type="term" value="F:toxin activity"/>
    <property type="evidence" value="ECO:0007669"/>
    <property type="project" value="UniProtKB-KW"/>
</dbReference>
<evidence type="ECO:0000255" key="1"/>
<evidence type="ECO:0000303" key="2">
    <source>
    </source>
</evidence>
<evidence type="ECO:0000305" key="3"/>
<evidence type="ECO:0000305" key="4">
    <source>
    </source>
</evidence>
<comment type="subcellular location">
    <subcellularLocation>
        <location evidence="4">Secreted</location>
    </subcellularLocation>
</comment>
<comment type="tissue specificity">
    <text evidence="4">Expressed by the venom gland.</text>
</comment>
<comment type="PTM">
    <text evidence="3">Contains 2 disulfide bonds.</text>
</comment>
<comment type="similarity">
    <text evidence="3">Belongs to the scoloptoxin-15 family.</text>
</comment>
<comment type="online information" name="National Center for Biotechnology Information (NCBI)">
    <link uri="https://www.ncbi.nlm.nih.gov/nuccore/GASI01000126"/>
</comment>
<accession>P0DQH1</accession>
<name>TXF1A_ETHRU</name>
<organism>
    <name type="scientific">Ethmostigmus rubripes</name>
    <name type="common">Giant centipede</name>
    <dbReference type="NCBI Taxonomy" id="62613"/>
    <lineage>
        <taxon>Eukaryota</taxon>
        <taxon>Metazoa</taxon>
        <taxon>Ecdysozoa</taxon>
        <taxon>Arthropoda</taxon>
        <taxon>Myriapoda</taxon>
        <taxon>Chilopoda</taxon>
        <taxon>Pleurostigmophora</taxon>
        <taxon>Scolopendromorpha</taxon>
        <taxon>Scolopendridae</taxon>
        <taxon>Ethmostigmus</taxon>
    </lineage>
</organism>
<keyword id="KW-1015">Disulfide bond</keyword>
<keyword id="KW-0964">Secreted</keyword>
<keyword id="KW-0732">Signal</keyword>
<keyword id="KW-0800">Toxin</keyword>
<feature type="signal peptide" evidence="1">
    <location>
        <begin position="1"/>
        <end position="22"/>
    </location>
</feature>
<feature type="chain" id="PRO_0000446789" description="U-scoloptoxin(15)-Er1a" evidence="3">
    <location>
        <begin position="23"/>
        <end position="80"/>
    </location>
</feature>
<sequence>MQNKGVVLTLFLVVSMAIVISSTKEKRAVIQKKYVDFKDRKYPWKEECFETCARTFTNGDQSKVSEVVPDYFKCICYVLI</sequence>
<reference key="1">
    <citation type="journal article" date="2014" name="Mol. Biol. Evol.">
        <title>Clawing through evolution: toxin diversification and convergence in the ancient lineage Chilopoda (centipedes).</title>
        <authorList>
            <person name="Undheim E.A."/>
            <person name="Jones A."/>
            <person name="Clauser K.R."/>
            <person name="Holland J.W."/>
            <person name="Pineda S.S."/>
            <person name="King G.F."/>
            <person name="Fry B.G."/>
        </authorList>
    </citation>
    <scope>NUCLEOTIDE SEQUENCE [MRNA]</scope>
    <scope>NOMENCLATURE</scope>
    <source>
        <tissue>Venom gland</tissue>
    </source>
</reference>